<name>B2MG_MUSCE</name>
<feature type="chain" id="PRO_0000080735" description="Beta-2-microglobulin">
    <location>
        <begin position="1" status="less than"/>
        <end position="92" status="greater than"/>
    </location>
</feature>
<feature type="domain" description="Ig-like C1-type">
    <location>
        <begin position="2"/>
        <end position="91"/>
    </location>
</feature>
<feature type="disulfide bond" evidence="2">
    <location>
        <begin position="22"/>
        <end position="77"/>
    </location>
</feature>
<feature type="non-terminal residue">
    <location>
        <position position="1"/>
    </location>
</feature>
<feature type="non-terminal residue">
    <location>
        <position position="92"/>
    </location>
</feature>
<gene>
    <name type="primary">B2m</name>
</gene>
<protein>
    <recommendedName>
        <fullName>Beta-2-microglobulin</fullName>
    </recommendedName>
</protein>
<reference key="1">
    <citation type="submission" date="1992-11" db="EMBL/GenBank/DDBJ databases">
        <authorList>
            <person name="Hermel E."/>
            <person name="She J.-X."/>
            <person name="Fischer-Lindahl K."/>
        </authorList>
    </citation>
    <scope>NUCLEOTIDE SEQUENCE [GENOMIC DNA]</scope>
    <source>
        <strain>Popaeus / CRP</strain>
    </source>
</reference>
<sequence length="92" mass="10671">PPQIQVYTRHPPENGKPNILNCYVSQFHPPHIEIEILKNGKKIPEIEMSDLSFSKDWSFYILAHTEITPTESDTFACRVKHVSLNEPKTVIW</sequence>
<keyword id="KW-1015">Disulfide bond</keyword>
<keyword id="KW-0391">Immunity</keyword>
<keyword id="KW-0393">Immunoglobulin domain</keyword>
<keyword id="KW-0490">MHC I</keyword>
<keyword id="KW-0964">Secreted</keyword>
<organism>
    <name type="scientific">Mus cervicolor</name>
    <name type="common">Fawn-colored mouse</name>
    <dbReference type="NCBI Taxonomy" id="10097"/>
    <lineage>
        <taxon>Eukaryota</taxon>
        <taxon>Metazoa</taxon>
        <taxon>Chordata</taxon>
        <taxon>Craniata</taxon>
        <taxon>Vertebrata</taxon>
        <taxon>Euteleostomi</taxon>
        <taxon>Mammalia</taxon>
        <taxon>Eutheria</taxon>
        <taxon>Euarchontoglires</taxon>
        <taxon>Glires</taxon>
        <taxon>Rodentia</taxon>
        <taxon>Myomorpha</taxon>
        <taxon>Muroidea</taxon>
        <taxon>Muridae</taxon>
        <taxon>Murinae</taxon>
        <taxon>Mus</taxon>
        <taxon>Mus</taxon>
    </lineage>
</organism>
<evidence type="ECO:0000250" key="1"/>
<evidence type="ECO:0000255" key="2">
    <source>
        <dbReference type="PROSITE-ProRule" id="PRU00114"/>
    </source>
</evidence>
<evidence type="ECO:0000305" key="3"/>
<proteinExistence type="inferred from homology"/>
<comment type="function">
    <text evidence="1">Component of the class I major histocompatibility complex (MHC). Involved in the presentation of peptide antigens to the immune system (By similarity).</text>
</comment>
<comment type="subunit">
    <text evidence="1">Heterodimer of an alpha chain and a beta chain. Beta-2-microglobulin is the beta-chain of major histocompatibility complex class I molecules (By similarity).</text>
</comment>
<comment type="subcellular location">
    <subcellularLocation>
        <location evidence="1">Secreted</location>
    </subcellularLocation>
</comment>
<comment type="similarity">
    <text evidence="3">Belongs to the beta-2-microglobulin family.</text>
</comment>
<dbReference type="EMBL" id="L04988">
    <property type="protein sequence ID" value="AAA37466.1"/>
    <property type="molecule type" value="Genomic_DNA"/>
</dbReference>
<dbReference type="SMR" id="P55078"/>
<dbReference type="GO" id="GO:0005576">
    <property type="term" value="C:extracellular region"/>
    <property type="evidence" value="ECO:0007669"/>
    <property type="project" value="UniProtKB-SubCell"/>
</dbReference>
<dbReference type="GO" id="GO:0042612">
    <property type="term" value="C:MHC class I protein complex"/>
    <property type="evidence" value="ECO:0007669"/>
    <property type="project" value="UniProtKB-KW"/>
</dbReference>
<dbReference type="GO" id="GO:0002474">
    <property type="term" value="P:antigen processing and presentation of peptide antigen via MHC class I"/>
    <property type="evidence" value="ECO:0007669"/>
    <property type="project" value="UniProtKB-KW"/>
</dbReference>
<dbReference type="GO" id="GO:0006955">
    <property type="term" value="P:immune response"/>
    <property type="evidence" value="ECO:0007669"/>
    <property type="project" value="InterPro"/>
</dbReference>
<dbReference type="CDD" id="cd05770">
    <property type="entry name" value="IgC1_beta2m"/>
    <property type="match status" value="1"/>
</dbReference>
<dbReference type="FunFam" id="2.60.40.10:FF:001005">
    <property type="entry name" value="Beta-2-microglobulin"/>
    <property type="match status" value="1"/>
</dbReference>
<dbReference type="Gene3D" id="2.60.40.10">
    <property type="entry name" value="Immunoglobulins"/>
    <property type="match status" value="1"/>
</dbReference>
<dbReference type="InterPro" id="IPR015707">
    <property type="entry name" value="B2Microglobulin"/>
</dbReference>
<dbReference type="InterPro" id="IPR007110">
    <property type="entry name" value="Ig-like_dom"/>
</dbReference>
<dbReference type="InterPro" id="IPR036179">
    <property type="entry name" value="Ig-like_dom_sf"/>
</dbReference>
<dbReference type="InterPro" id="IPR013783">
    <property type="entry name" value="Ig-like_fold"/>
</dbReference>
<dbReference type="InterPro" id="IPR003006">
    <property type="entry name" value="Ig/MHC_CS"/>
</dbReference>
<dbReference type="InterPro" id="IPR003597">
    <property type="entry name" value="Ig_C1-set"/>
</dbReference>
<dbReference type="InterPro" id="IPR050160">
    <property type="entry name" value="MHC/Immunoglobulin"/>
</dbReference>
<dbReference type="PANTHER" id="PTHR19944:SF62">
    <property type="entry name" value="BETA-2-MICROGLOBULIN"/>
    <property type="match status" value="1"/>
</dbReference>
<dbReference type="PANTHER" id="PTHR19944">
    <property type="entry name" value="MHC CLASS II-RELATED"/>
    <property type="match status" value="1"/>
</dbReference>
<dbReference type="Pfam" id="PF07654">
    <property type="entry name" value="C1-set"/>
    <property type="match status" value="1"/>
</dbReference>
<dbReference type="SMART" id="SM00407">
    <property type="entry name" value="IGc1"/>
    <property type="match status" value="1"/>
</dbReference>
<dbReference type="SUPFAM" id="SSF48726">
    <property type="entry name" value="Immunoglobulin"/>
    <property type="match status" value="1"/>
</dbReference>
<dbReference type="PROSITE" id="PS50835">
    <property type="entry name" value="IG_LIKE"/>
    <property type="match status" value="1"/>
</dbReference>
<dbReference type="PROSITE" id="PS00290">
    <property type="entry name" value="IG_MHC"/>
    <property type="match status" value="1"/>
</dbReference>
<accession>P55078</accession>